<keyword id="KW-0408">Iron</keyword>
<keyword id="KW-0479">Metal-binding</keyword>
<sequence>MNDSEFHRLADALWLTIEERLDNWDGDSDIDCEINGGVLTISFENGSKIIINRQEPLHQVWLATKQGGYHFDLKGDEWICDRSGETFWDLLEQAATQQAGEKVSFR</sequence>
<proteinExistence type="inferred from homology"/>
<accession>B4TB34</accession>
<gene>
    <name evidence="1" type="primary">cyaY</name>
    <name type="ordered locus">SeHA_C4270</name>
</gene>
<dbReference type="EMBL" id="CP001120">
    <property type="protein sequence ID" value="ACF66962.1"/>
    <property type="molecule type" value="Genomic_DNA"/>
</dbReference>
<dbReference type="RefSeq" id="WP_000999919.1">
    <property type="nucleotide sequence ID" value="NC_011083.1"/>
</dbReference>
<dbReference type="SMR" id="B4TB34"/>
<dbReference type="KEGG" id="seh:SeHA_C4270"/>
<dbReference type="HOGENOM" id="CLU_080880_3_0_6"/>
<dbReference type="Proteomes" id="UP000001866">
    <property type="component" value="Chromosome"/>
</dbReference>
<dbReference type="GO" id="GO:0005829">
    <property type="term" value="C:cytosol"/>
    <property type="evidence" value="ECO:0007669"/>
    <property type="project" value="TreeGrafter"/>
</dbReference>
<dbReference type="GO" id="GO:0008199">
    <property type="term" value="F:ferric iron binding"/>
    <property type="evidence" value="ECO:0007669"/>
    <property type="project" value="InterPro"/>
</dbReference>
<dbReference type="GO" id="GO:0008198">
    <property type="term" value="F:ferrous iron binding"/>
    <property type="evidence" value="ECO:0007669"/>
    <property type="project" value="TreeGrafter"/>
</dbReference>
<dbReference type="GO" id="GO:0016226">
    <property type="term" value="P:iron-sulfur cluster assembly"/>
    <property type="evidence" value="ECO:0007669"/>
    <property type="project" value="UniProtKB-UniRule"/>
</dbReference>
<dbReference type="CDD" id="cd00503">
    <property type="entry name" value="Frataxin"/>
    <property type="match status" value="1"/>
</dbReference>
<dbReference type="FunFam" id="3.30.920.10:FF:000001">
    <property type="entry name" value="Iron-sulfur cluster assembly protein CyaY"/>
    <property type="match status" value="1"/>
</dbReference>
<dbReference type="Gene3D" id="3.30.920.10">
    <property type="entry name" value="Frataxin/CyaY"/>
    <property type="match status" value="1"/>
</dbReference>
<dbReference type="HAMAP" id="MF_00142">
    <property type="entry name" value="CyaY"/>
    <property type="match status" value="1"/>
</dbReference>
<dbReference type="InterPro" id="IPR047584">
    <property type="entry name" value="CyaY"/>
</dbReference>
<dbReference type="InterPro" id="IPR002908">
    <property type="entry name" value="Frataxin/CyaY"/>
</dbReference>
<dbReference type="InterPro" id="IPR036524">
    <property type="entry name" value="Frataxin/CyaY_sf"/>
</dbReference>
<dbReference type="InterPro" id="IPR020895">
    <property type="entry name" value="Frataxin_CS"/>
</dbReference>
<dbReference type="NCBIfam" id="TIGR03421">
    <property type="entry name" value="FeS_CyaY"/>
    <property type="match status" value="1"/>
</dbReference>
<dbReference type="PANTHER" id="PTHR16821">
    <property type="entry name" value="FRATAXIN"/>
    <property type="match status" value="1"/>
</dbReference>
<dbReference type="PANTHER" id="PTHR16821:SF2">
    <property type="entry name" value="FRATAXIN, MITOCHONDRIAL"/>
    <property type="match status" value="1"/>
</dbReference>
<dbReference type="Pfam" id="PF01491">
    <property type="entry name" value="Frataxin_Cyay"/>
    <property type="match status" value="1"/>
</dbReference>
<dbReference type="SMART" id="SM01219">
    <property type="entry name" value="Frataxin_Cyay"/>
    <property type="match status" value="1"/>
</dbReference>
<dbReference type="SUPFAM" id="SSF55387">
    <property type="entry name" value="Frataxin/Nqo15-like"/>
    <property type="match status" value="1"/>
</dbReference>
<dbReference type="PROSITE" id="PS01344">
    <property type="entry name" value="FRATAXIN_1"/>
    <property type="match status" value="1"/>
</dbReference>
<dbReference type="PROSITE" id="PS50810">
    <property type="entry name" value="FRATAXIN_2"/>
    <property type="match status" value="1"/>
</dbReference>
<protein>
    <recommendedName>
        <fullName evidence="1">Iron-sulfur cluster assembly protein CyaY</fullName>
    </recommendedName>
</protein>
<comment type="function">
    <text evidence="1">Involved in iron-sulfur (Fe-S) cluster assembly. May act as a regulator of Fe-S biogenesis.</text>
</comment>
<comment type="similarity">
    <text evidence="1">Belongs to the frataxin family.</text>
</comment>
<feature type="chain" id="PRO_1000096255" description="Iron-sulfur cluster assembly protein CyaY">
    <location>
        <begin position="1"/>
        <end position="106"/>
    </location>
</feature>
<evidence type="ECO:0000255" key="1">
    <source>
        <dbReference type="HAMAP-Rule" id="MF_00142"/>
    </source>
</evidence>
<organism>
    <name type="scientific">Salmonella heidelberg (strain SL476)</name>
    <dbReference type="NCBI Taxonomy" id="454169"/>
    <lineage>
        <taxon>Bacteria</taxon>
        <taxon>Pseudomonadati</taxon>
        <taxon>Pseudomonadota</taxon>
        <taxon>Gammaproteobacteria</taxon>
        <taxon>Enterobacterales</taxon>
        <taxon>Enterobacteriaceae</taxon>
        <taxon>Salmonella</taxon>
    </lineage>
</organism>
<name>CYAY_SALHS</name>
<reference key="1">
    <citation type="journal article" date="2011" name="J. Bacteriol.">
        <title>Comparative genomics of 28 Salmonella enterica isolates: evidence for CRISPR-mediated adaptive sublineage evolution.</title>
        <authorList>
            <person name="Fricke W.F."/>
            <person name="Mammel M.K."/>
            <person name="McDermott P.F."/>
            <person name="Tartera C."/>
            <person name="White D.G."/>
            <person name="Leclerc J.E."/>
            <person name="Ravel J."/>
            <person name="Cebula T.A."/>
        </authorList>
    </citation>
    <scope>NUCLEOTIDE SEQUENCE [LARGE SCALE GENOMIC DNA]</scope>
    <source>
        <strain>SL476</strain>
    </source>
</reference>